<protein>
    <recommendedName>
        <fullName evidence="1">Homoserine O-succinyltransferase</fullName>
        <shortName evidence="1">HST</shortName>
        <ecNumber evidence="1">2.3.1.46</ecNumber>
    </recommendedName>
    <alternativeName>
        <fullName evidence="1">Homoserine transsuccinylase</fullName>
        <shortName evidence="1">HTS</shortName>
    </alternativeName>
</protein>
<keyword id="KW-0012">Acyltransferase</keyword>
<keyword id="KW-0028">Amino-acid biosynthesis</keyword>
<keyword id="KW-0963">Cytoplasm</keyword>
<keyword id="KW-0486">Methionine biosynthesis</keyword>
<keyword id="KW-0808">Transferase</keyword>
<organism>
    <name type="scientific">Yersinia pseudotuberculosis serotype O:3 (strain YPIII)</name>
    <dbReference type="NCBI Taxonomy" id="502800"/>
    <lineage>
        <taxon>Bacteria</taxon>
        <taxon>Pseudomonadati</taxon>
        <taxon>Pseudomonadota</taxon>
        <taxon>Gammaproteobacteria</taxon>
        <taxon>Enterobacterales</taxon>
        <taxon>Yersiniaceae</taxon>
        <taxon>Yersinia</taxon>
    </lineage>
</organism>
<name>METAS_YERPY</name>
<gene>
    <name evidence="1" type="primary">metAS</name>
    <name type="ordered locus">YPK_0363</name>
</gene>
<reference key="1">
    <citation type="submission" date="2008-02" db="EMBL/GenBank/DDBJ databases">
        <title>Complete sequence of Yersinia pseudotuberculosis YPIII.</title>
        <authorList>
            <consortium name="US DOE Joint Genome Institute"/>
            <person name="Copeland A."/>
            <person name="Lucas S."/>
            <person name="Lapidus A."/>
            <person name="Glavina del Rio T."/>
            <person name="Dalin E."/>
            <person name="Tice H."/>
            <person name="Bruce D."/>
            <person name="Goodwin L."/>
            <person name="Pitluck S."/>
            <person name="Munk A.C."/>
            <person name="Brettin T."/>
            <person name="Detter J.C."/>
            <person name="Han C."/>
            <person name="Tapia R."/>
            <person name="Schmutz J."/>
            <person name="Larimer F."/>
            <person name="Land M."/>
            <person name="Hauser L."/>
            <person name="Challacombe J.F."/>
            <person name="Green L."/>
            <person name="Lindler L.E."/>
            <person name="Nikolich M.P."/>
            <person name="Richardson P."/>
        </authorList>
    </citation>
    <scope>NUCLEOTIDE SEQUENCE [LARGE SCALE GENOMIC DNA]</scope>
    <source>
        <strain>YPIII</strain>
    </source>
</reference>
<feature type="chain" id="PRO_1000115204" description="Homoserine O-succinyltransferase">
    <location>
        <begin position="1"/>
        <end position="309"/>
    </location>
</feature>
<feature type="active site" description="Acyl-thioester intermediate" evidence="1">
    <location>
        <position position="142"/>
    </location>
</feature>
<feature type="active site" description="Proton acceptor" evidence="1">
    <location>
        <position position="235"/>
    </location>
</feature>
<feature type="active site" evidence="1">
    <location>
        <position position="237"/>
    </location>
</feature>
<feature type="binding site" evidence="1">
    <location>
        <position position="163"/>
    </location>
    <ligand>
        <name>substrate</name>
    </ligand>
</feature>
<feature type="binding site" evidence="1">
    <location>
        <position position="192"/>
    </location>
    <ligand>
        <name>substrate</name>
    </ligand>
</feature>
<feature type="binding site" evidence="1">
    <location>
        <position position="249"/>
    </location>
    <ligand>
        <name>substrate</name>
    </ligand>
</feature>
<feature type="site" description="Important for acyl-CoA specificity" evidence="1">
    <location>
        <position position="111"/>
    </location>
</feature>
<feature type="site" description="Important for substrate specificity" evidence="1">
    <location>
        <position position="192"/>
    </location>
</feature>
<dbReference type="EC" id="2.3.1.46" evidence="1"/>
<dbReference type="EMBL" id="CP000950">
    <property type="protein sequence ID" value="ACA66670.1"/>
    <property type="molecule type" value="Genomic_DNA"/>
</dbReference>
<dbReference type="SMR" id="B1JJL9"/>
<dbReference type="KEGG" id="ypy:YPK_0363"/>
<dbReference type="PATRIC" id="fig|502800.11.peg.965"/>
<dbReference type="UniPathway" id="UPA00051">
    <property type="reaction ID" value="UER00075"/>
</dbReference>
<dbReference type="GO" id="GO:0005737">
    <property type="term" value="C:cytoplasm"/>
    <property type="evidence" value="ECO:0007669"/>
    <property type="project" value="UniProtKB-SubCell"/>
</dbReference>
<dbReference type="GO" id="GO:0004414">
    <property type="term" value="F:homoserine O-acetyltransferase activity"/>
    <property type="evidence" value="ECO:0007669"/>
    <property type="project" value="UniProtKB-UniRule"/>
</dbReference>
<dbReference type="GO" id="GO:0008899">
    <property type="term" value="F:homoserine O-succinyltransferase activity"/>
    <property type="evidence" value="ECO:0007669"/>
    <property type="project" value="UniProtKB-EC"/>
</dbReference>
<dbReference type="GO" id="GO:0019281">
    <property type="term" value="P:L-methionine biosynthetic process from homoserine via O-succinyl-L-homoserine and cystathionine"/>
    <property type="evidence" value="ECO:0007669"/>
    <property type="project" value="InterPro"/>
</dbReference>
<dbReference type="CDD" id="cd03131">
    <property type="entry name" value="GATase1_HTS"/>
    <property type="match status" value="1"/>
</dbReference>
<dbReference type="FunFam" id="3.40.50.880:FF:000004">
    <property type="entry name" value="Homoserine O-succinyltransferase"/>
    <property type="match status" value="1"/>
</dbReference>
<dbReference type="Gene3D" id="3.40.50.880">
    <property type="match status" value="1"/>
</dbReference>
<dbReference type="HAMAP" id="MF_00295">
    <property type="entry name" value="MetA_acyltransf"/>
    <property type="match status" value="1"/>
</dbReference>
<dbReference type="InterPro" id="IPR029062">
    <property type="entry name" value="Class_I_gatase-like"/>
</dbReference>
<dbReference type="InterPro" id="IPR005697">
    <property type="entry name" value="HST_MetA"/>
</dbReference>
<dbReference type="InterPro" id="IPR033752">
    <property type="entry name" value="MetA_family"/>
</dbReference>
<dbReference type="NCBIfam" id="TIGR01001">
    <property type="entry name" value="metA"/>
    <property type="match status" value="1"/>
</dbReference>
<dbReference type="PANTHER" id="PTHR20919">
    <property type="entry name" value="HOMOSERINE O-SUCCINYLTRANSFERASE"/>
    <property type="match status" value="1"/>
</dbReference>
<dbReference type="PANTHER" id="PTHR20919:SF0">
    <property type="entry name" value="HOMOSERINE O-SUCCINYLTRANSFERASE"/>
    <property type="match status" value="1"/>
</dbReference>
<dbReference type="Pfam" id="PF04204">
    <property type="entry name" value="HTS"/>
    <property type="match status" value="1"/>
</dbReference>
<dbReference type="PIRSF" id="PIRSF000450">
    <property type="entry name" value="H_ser_succinyltr"/>
    <property type="match status" value="1"/>
</dbReference>
<dbReference type="SUPFAM" id="SSF52317">
    <property type="entry name" value="Class I glutamine amidotransferase-like"/>
    <property type="match status" value="1"/>
</dbReference>
<evidence type="ECO:0000255" key="1">
    <source>
        <dbReference type="HAMAP-Rule" id="MF_00295"/>
    </source>
</evidence>
<accession>B1JJL9</accession>
<sequence>MPIRVPDELPAVSFLRNENVFVMASSRAKTQEIRPLKVLILNLMPKKIETENQFLRLLSNSPLQVDIQLLRVDSRESKNTPTEHLNNFYCDFEDIQDQNFDGLIVTGAPLGLVDFCDVAYWPQIERIIAWAKEHVTSTLFVCWAVQAALNILYGIPKMTREVKLSGIYQHQTLEPLALLTRGFDETFLAPHSRYADFPVEVLQQYTDLDILVSSEEAGAYLFASKDKRVAFVTGHPEYDVDTLAGEYQRDLAAGLNPQVPLNYFPSDDASLRPKASWRSHGHLLFANWLNYYVYQITPFDLRHMNPTLD</sequence>
<proteinExistence type="inferred from homology"/>
<comment type="function">
    <text evidence="1">Transfers a succinyl group from succinyl-CoA to L-homoserine, forming succinyl-L-homoserine.</text>
</comment>
<comment type="catalytic activity">
    <reaction evidence="1">
        <text>L-homoserine + succinyl-CoA = O-succinyl-L-homoserine + CoA</text>
        <dbReference type="Rhea" id="RHEA:22008"/>
        <dbReference type="ChEBI" id="CHEBI:57287"/>
        <dbReference type="ChEBI" id="CHEBI:57292"/>
        <dbReference type="ChEBI" id="CHEBI:57476"/>
        <dbReference type="ChEBI" id="CHEBI:57661"/>
        <dbReference type="EC" id="2.3.1.46"/>
    </reaction>
</comment>
<comment type="pathway">
    <text evidence="1">Amino-acid biosynthesis; L-methionine biosynthesis via de novo pathway; O-succinyl-L-homoserine from L-homoserine: step 1/1.</text>
</comment>
<comment type="subcellular location">
    <subcellularLocation>
        <location evidence="1">Cytoplasm</location>
    </subcellularLocation>
</comment>
<comment type="similarity">
    <text evidence="1">Belongs to the MetA family.</text>
</comment>